<accession>A1RJZ7</accession>
<protein>
    <recommendedName>
        <fullName evidence="1">Ion-translocating oxidoreductase complex subunit E</fullName>
        <ecNumber evidence="1">7.-.-.-</ecNumber>
    </recommendedName>
    <alternativeName>
        <fullName evidence="1">Rnf electron transport complex subunit E</fullName>
    </alternativeName>
</protein>
<feature type="chain" id="PRO_1000014108" description="Ion-translocating oxidoreductase complex subunit E">
    <location>
        <begin position="1"/>
        <end position="232"/>
    </location>
</feature>
<feature type="transmembrane region" description="Helical" evidence="1">
    <location>
        <begin position="18"/>
        <end position="38"/>
    </location>
</feature>
<feature type="transmembrane region" description="Helical" evidence="1">
    <location>
        <begin position="39"/>
        <end position="59"/>
    </location>
</feature>
<feature type="transmembrane region" description="Helical" evidence="1">
    <location>
        <begin position="69"/>
        <end position="89"/>
    </location>
</feature>
<feature type="transmembrane region" description="Helical" evidence="1">
    <location>
        <begin position="93"/>
        <end position="113"/>
    </location>
</feature>
<feature type="transmembrane region" description="Helical" evidence="1">
    <location>
        <begin position="127"/>
        <end position="147"/>
    </location>
</feature>
<feature type="transmembrane region" description="Helical" evidence="1">
    <location>
        <begin position="182"/>
        <end position="202"/>
    </location>
</feature>
<proteinExistence type="inferred from homology"/>
<comment type="function">
    <text evidence="1">Part of a membrane-bound complex that couples electron transfer with translocation of ions across the membrane.</text>
</comment>
<comment type="subunit">
    <text evidence="1">The complex is composed of six subunits: RnfA, RnfB, RnfC, RnfD, RnfE and RnfG.</text>
</comment>
<comment type="subcellular location">
    <subcellularLocation>
        <location evidence="1">Cell inner membrane</location>
        <topology evidence="1">Multi-pass membrane protein</topology>
    </subcellularLocation>
</comment>
<comment type="similarity">
    <text evidence="1">Belongs to the NqrDE/RnfAE family.</text>
</comment>
<sequence length="232" mass="25026">MTNYREIAWQGLWKNNPGLVQLLGLCPLLAVTATITNALGLGVATMLVLIGSNILVSLVRDYVPKEIRIPVFVMIIAALVTTVQLLINAYAYGLYLSLGIFLPLIVTNCIIIGRAEAFASRNNAFSAAFDGLMMGLGFTLVLAVLGATRELLGQGTLFDGADQLLGPWAKSLTIHVWQVDTPFLLAMLPPGAFIVMGLLIALKNVIDKKLKEHQPQVATEPSVTRARITKVS</sequence>
<organism>
    <name type="scientific">Shewanella sp. (strain W3-18-1)</name>
    <dbReference type="NCBI Taxonomy" id="351745"/>
    <lineage>
        <taxon>Bacteria</taxon>
        <taxon>Pseudomonadati</taxon>
        <taxon>Pseudomonadota</taxon>
        <taxon>Gammaproteobacteria</taxon>
        <taxon>Alteromonadales</taxon>
        <taxon>Shewanellaceae</taxon>
        <taxon>Shewanella</taxon>
    </lineage>
</organism>
<keyword id="KW-0997">Cell inner membrane</keyword>
<keyword id="KW-1003">Cell membrane</keyword>
<keyword id="KW-0249">Electron transport</keyword>
<keyword id="KW-0472">Membrane</keyword>
<keyword id="KW-1278">Translocase</keyword>
<keyword id="KW-0812">Transmembrane</keyword>
<keyword id="KW-1133">Transmembrane helix</keyword>
<keyword id="KW-0813">Transport</keyword>
<reference key="1">
    <citation type="submission" date="2006-12" db="EMBL/GenBank/DDBJ databases">
        <title>Complete sequence of Shewanella sp. W3-18-1.</title>
        <authorList>
            <consortium name="US DOE Joint Genome Institute"/>
            <person name="Copeland A."/>
            <person name="Lucas S."/>
            <person name="Lapidus A."/>
            <person name="Barry K."/>
            <person name="Detter J.C."/>
            <person name="Glavina del Rio T."/>
            <person name="Hammon N."/>
            <person name="Israni S."/>
            <person name="Dalin E."/>
            <person name="Tice H."/>
            <person name="Pitluck S."/>
            <person name="Chain P."/>
            <person name="Malfatti S."/>
            <person name="Shin M."/>
            <person name="Vergez L."/>
            <person name="Schmutz J."/>
            <person name="Larimer F."/>
            <person name="Land M."/>
            <person name="Hauser L."/>
            <person name="Kyrpides N."/>
            <person name="Lykidis A."/>
            <person name="Tiedje J."/>
            <person name="Richardson P."/>
        </authorList>
    </citation>
    <scope>NUCLEOTIDE SEQUENCE [LARGE SCALE GENOMIC DNA]</scope>
    <source>
        <strain>W3-18-1</strain>
    </source>
</reference>
<dbReference type="EC" id="7.-.-.-" evidence="1"/>
<dbReference type="EMBL" id="CP000503">
    <property type="protein sequence ID" value="ABM24992.1"/>
    <property type="molecule type" value="Genomic_DNA"/>
</dbReference>
<dbReference type="RefSeq" id="WP_011789460.1">
    <property type="nucleotide sequence ID" value="NC_008750.1"/>
</dbReference>
<dbReference type="SMR" id="A1RJZ7"/>
<dbReference type="KEGG" id="shw:Sputw3181_2164"/>
<dbReference type="HOGENOM" id="CLU_046659_1_0_6"/>
<dbReference type="Proteomes" id="UP000002597">
    <property type="component" value="Chromosome"/>
</dbReference>
<dbReference type="GO" id="GO:0005886">
    <property type="term" value="C:plasma membrane"/>
    <property type="evidence" value="ECO:0007669"/>
    <property type="project" value="UniProtKB-SubCell"/>
</dbReference>
<dbReference type="GO" id="GO:0022900">
    <property type="term" value="P:electron transport chain"/>
    <property type="evidence" value="ECO:0007669"/>
    <property type="project" value="UniProtKB-UniRule"/>
</dbReference>
<dbReference type="HAMAP" id="MF_00478">
    <property type="entry name" value="RsxE_RnfE"/>
    <property type="match status" value="1"/>
</dbReference>
<dbReference type="InterPro" id="IPR003667">
    <property type="entry name" value="NqrDE/RnfAE"/>
</dbReference>
<dbReference type="InterPro" id="IPR010968">
    <property type="entry name" value="RnfE"/>
</dbReference>
<dbReference type="NCBIfam" id="NF009070">
    <property type="entry name" value="PRK12405.1"/>
    <property type="match status" value="1"/>
</dbReference>
<dbReference type="NCBIfam" id="TIGR01948">
    <property type="entry name" value="rnfE"/>
    <property type="match status" value="1"/>
</dbReference>
<dbReference type="PANTHER" id="PTHR30586">
    <property type="entry name" value="ELECTRON TRANSPORT COMPLEX PROTEIN RNFE"/>
    <property type="match status" value="1"/>
</dbReference>
<dbReference type="PANTHER" id="PTHR30586:SF0">
    <property type="entry name" value="ION-TRANSLOCATING OXIDOREDUCTASE COMPLEX SUBUNIT E"/>
    <property type="match status" value="1"/>
</dbReference>
<dbReference type="Pfam" id="PF02508">
    <property type="entry name" value="Rnf-Nqr"/>
    <property type="match status" value="1"/>
</dbReference>
<dbReference type="PIRSF" id="PIRSF006102">
    <property type="entry name" value="NQR_DE"/>
    <property type="match status" value="1"/>
</dbReference>
<name>RNFE_SHESW</name>
<evidence type="ECO:0000255" key="1">
    <source>
        <dbReference type="HAMAP-Rule" id="MF_00478"/>
    </source>
</evidence>
<gene>
    <name evidence="1" type="primary">rnfE</name>
    <name type="ordered locus">Sputw3181_2164</name>
</gene>